<name>HIS3_MYCLB</name>
<comment type="function">
    <text evidence="1">Catalyzes the hydrolysis of the adenine ring of phosphoribosyl-AMP.</text>
</comment>
<comment type="catalytic activity">
    <reaction evidence="1">
        <text>1-(5-phospho-beta-D-ribosyl)-5'-AMP + H2O = 1-(5-phospho-beta-D-ribosyl)-5-[(5-phospho-beta-D-ribosylamino)methylideneamino]imidazole-4-carboxamide</text>
        <dbReference type="Rhea" id="RHEA:20049"/>
        <dbReference type="ChEBI" id="CHEBI:15377"/>
        <dbReference type="ChEBI" id="CHEBI:58435"/>
        <dbReference type="ChEBI" id="CHEBI:59457"/>
        <dbReference type="EC" id="3.5.4.19"/>
    </reaction>
</comment>
<comment type="cofactor">
    <cofactor evidence="1">
        <name>Mg(2+)</name>
        <dbReference type="ChEBI" id="CHEBI:18420"/>
    </cofactor>
    <text evidence="1">Binds 1 Mg(2+) ion per subunit.</text>
</comment>
<comment type="cofactor">
    <cofactor evidence="1">
        <name>Zn(2+)</name>
        <dbReference type="ChEBI" id="CHEBI:29105"/>
    </cofactor>
    <text evidence="1">Binds 1 zinc ion per subunit.</text>
</comment>
<comment type="pathway">
    <text evidence="1">Amino-acid biosynthesis; L-histidine biosynthesis; L-histidine from 5-phospho-alpha-D-ribose 1-diphosphate: step 3/9.</text>
</comment>
<comment type="subunit">
    <text evidence="1">Homodimer.</text>
</comment>
<comment type="subcellular location">
    <subcellularLocation>
        <location evidence="1">Cytoplasm</location>
    </subcellularLocation>
</comment>
<comment type="similarity">
    <text evidence="1">Belongs to the PRA-CH family.</text>
</comment>
<keyword id="KW-0028">Amino-acid biosynthesis</keyword>
<keyword id="KW-0963">Cytoplasm</keyword>
<keyword id="KW-0368">Histidine biosynthesis</keyword>
<keyword id="KW-0378">Hydrolase</keyword>
<keyword id="KW-0460">Magnesium</keyword>
<keyword id="KW-0479">Metal-binding</keyword>
<keyword id="KW-0862">Zinc</keyword>
<dbReference type="EC" id="3.5.4.19" evidence="1"/>
<dbReference type="EMBL" id="FM211192">
    <property type="protein sequence ID" value="CAR71359.1"/>
    <property type="molecule type" value="Genomic_DNA"/>
</dbReference>
<dbReference type="SMR" id="B8ZRB5"/>
<dbReference type="KEGG" id="mlb:MLBr01264"/>
<dbReference type="HOGENOM" id="CLU_048577_5_1_11"/>
<dbReference type="UniPathway" id="UPA00031">
    <property type="reaction ID" value="UER00008"/>
</dbReference>
<dbReference type="Proteomes" id="UP000006900">
    <property type="component" value="Chromosome"/>
</dbReference>
<dbReference type="GO" id="GO:0005737">
    <property type="term" value="C:cytoplasm"/>
    <property type="evidence" value="ECO:0007669"/>
    <property type="project" value="UniProtKB-SubCell"/>
</dbReference>
<dbReference type="GO" id="GO:0000287">
    <property type="term" value="F:magnesium ion binding"/>
    <property type="evidence" value="ECO:0007669"/>
    <property type="project" value="UniProtKB-UniRule"/>
</dbReference>
<dbReference type="GO" id="GO:0004635">
    <property type="term" value="F:phosphoribosyl-AMP cyclohydrolase activity"/>
    <property type="evidence" value="ECO:0007669"/>
    <property type="project" value="UniProtKB-UniRule"/>
</dbReference>
<dbReference type="GO" id="GO:0008270">
    <property type="term" value="F:zinc ion binding"/>
    <property type="evidence" value="ECO:0007669"/>
    <property type="project" value="UniProtKB-UniRule"/>
</dbReference>
<dbReference type="GO" id="GO:0000105">
    <property type="term" value="P:L-histidine biosynthetic process"/>
    <property type="evidence" value="ECO:0007669"/>
    <property type="project" value="UniProtKB-UniRule"/>
</dbReference>
<dbReference type="FunFam" id="3.10.20.810:FF:000001">
    <property type="entry name" value="Histidine biosynthesis bifunctional protein HisIE"/>
    <property type="match status" value="1"/>
</dbReference>
<dbReference type="Gene3D" id="3.10.20.810">
    <property type="entry name" value="Phosphoribosyl-AMP cyclohydrolase"/>
    <property type="match status" value="1"/>
</dbReference>
<dbReference type="HAMAP" id="MF_01021">
    <property type="entry name" value="HisI"/>
    <property type="match status" value="1"/>
</dbReference>
<dbReference type="InterPro" id="IPR026660">
    <property type="entry name" value="PRA-CH"/>
</dbReference>
<dbReference type="InterPro" id="IPR002496">
    <property type="entry name" value="PRib_AMP_CycHydrolase_dom"/>
</dbReference>
<dbReference type="InterPro" id="IPR038019">
    <property type="entry name" value="PRib_AMP_CycHydrolase_sf"/>
</dbReference>
<dbReference type="NCBIfam" id="NF000768">
    <property type="entry name" value="PRK00051.1"/>
    <property type="match status" value="1"/>
</dbReference>
<dbReference type="PANTHER" id="PTHR42945">
    <property type="entry name" value="HISTIDINE BIOSYNTHESIS BIFUNCTIONAL PROTEIN"/>
    <property type="match status" value="1"/>
</dbReference>
<dbReference type="PANTHER" id="PTHR42945:SF11">
    <property type="entry name" value="PHOSPHORIBOSYL-AMP CYCLOHYDROLASE"/>
    <property type="match status" value="1"/>
</dbReference>
<dbReference type="Pfam" id="PF01502">
    <property type="entry name" value="PRA-CH"/>
    <property type="match status" value="1"/>
</dbReference>
<dbReference type="SUPFAM" id="SSF141734">
    <property type="entry name" value="HisI-like"/>
    <property type="match status" value="1"/>
</dbReference>
<evidence type="ECO:0000255" key="1">
    <source>
        <dbReference type="HAMAP-Rule" id="MF_01021"/>
    </source>
</evidence>
<gene>
    <name evidence="1" type="primary">hisI</name>
    <name type="ordered locus">MLBr01264</name>
</gene>
<organism>
    <name type="scientific">Mycobacterium leprae (strain Br4923)</name>
    <dbReference type="NCBI Taxonomy" id="561304"/>
    <lineage>
        <taxon>Bacteria</taxon>
        <taxon>Bacillati</taxon>
        <taxon>Actinomycetota</taxon>
        <taxon>Actinomycetes</taxon>
        <taxon>Mycobacteriales</taxon>
        <taxon>Mycobacteriaceae</taxon>
        <taxon>Mycobacterium</taxon>
    </lineage>
</organism>
<feature type="chain" id="PRO_1000149075" description="Phosphoribosyl-AMP cyclohydrolase">
    <location>
        <begin position="1"/>
        <end position="115"/>
    </location>
</feature>
<feature type="binding site" evidence="1">
    <location>
        <position position="80"/>
    </location>
    <ligand>
        <name>Mg(2+)</name>
        <dbReference type="ChEBI" id="CHEBI:18420"/>
    </ligand>
</feature>
<feature type="binding site" evidence="1">
    <location>
        <position position="81"/>
    </location>
    <ligand>
        <name>Zn(2+)</name>
        <dbReference type="ChEBI" id="CHEBI:29105"/>
        <note>ligand shared between dimeric partners</note>
    </ligand>
</feature>
<feature type="binding site" evidence="1">
    <location>
        <position position="82"/>
    </location>
    <ligand>
        <name>Mg(2+)</name>
        <dbReference type="ChEBI" id="CHEBI:18420"/>
    </ligand>
</feature>
<feature type="binding site" evidence="1">
    <location>
        <position position="84"/>
    </location>
    <ligand>
        <name>Mg(2+)</name>
        <dbReference type="ChEBI" id="CHEBI:18420"/>
    </ligand>
</feature>
<feature type="binding site" evidence="1">
    <location>
        <position position="97"/>
    </location>
    <ligand>
        <name>Zn(2+)</name>
        <dbReference type="ChEBI" id="CHEBI:29105"/>
        <note>ligand shared between dimeric partners</note>
    </ligand>
</feature>
<feature type="binding site" evidence="1">
    <location>
        <position position="104"/>
    </location>
    <ligand>
        <name>Zn(2+)</name>
        <dbReference type="ChEBI" id="CHEBI:29105"/>
        <note>ligand shared between dimeric partners</note>
    </ligand>
</feature>
<accession>B8ZRB5</accession>
<reference key="1">
    <citation type="journal article" date="2009" name="Nat. Genet.">
        <title>Comparative genomic and phylogeographic analysis of Mycobacterium leprae.</title>
        <authorList>
            <person name="Monot M."/>
            <person name="Honore N."/>
            <person name="Garnier T."/>
            <person name="Zidane N."/>
            <person name="Sherafi D."/>
            <person name="Paniz-Mondolfi A."/>
            <person name="Matsuoka M."/>
            <person name="Taylor G.M."/>
            <person name="Donoghue H.D."/>
            <person name="Bouwman A."/>
            <person name="Mays S."/>
            <person name="Watson C."/>
            <person name="Lockwood D."/>
            <person name="Khamispour A."/>
            <person name="Dowlati Y."/>
            <person name="Jianping S."/>
            <person name="Rea T.H."/>
            <person name="Vera-Cabrera L."/>
            <person name="Stefani M.M."/>
            <person name="Banu S."/>
            <person name="Macdonald M."/>
            <person name="Sapkota B.R."/>
            <person name="Spencer J.S."/>
            <person name="Thomas J."/>
            <person name="Harshman K."/>
            <person name="Singh P."/>
            <person name="Busso P."/>
            <person name="Gattiker A."/>
            <person name="Rougemont J."/>
            <person name="Brennan P.J."/>
            <person name="Cole S.T."/>
        </authorList>
    </citation>
    <scope>NUCLEOTIDE SEQUENCE [LARGE SCALE GENOMIC DNA]</scope>
    <source>
        <strain>Br4923</strain>
    </source>
</reference>
<proteinExistence type="inferred from homology"/>
<sequence>MTLDPDIAVRLKRNAEGLFTAVVQERSSGDVLMVAWMDDQALARTLETREANYYSRSRAEQWIKGSTSGNTQHVHSVRLDCDGDTVLLTVDQVGGACHTGAHSCFDSAMLLAPQD</sequence>
<protein>
    <recommendedName>
        <fullName evidence="1">Phosphoribosyl-AMP cyclohydrolase</fullName>
        <shortName evidence="1">PRA-CH</shortName>
        <ecNumber evidence="1">3.5.4.19</ecNumber>
    </recommendedName>
</protein>